<dbReference type="EMBL" id="AJ251914">
    <property type="protein sequence ID" value="CAB63854.1"/>
    <property type="molecule type" value="Genomic_DNA"/>
</dbReference>
<dbReference type="EMBL" id="BX548169">
    <property type="protein sequence ID" value="CAN59681.1"/>
    <property type="molecule type" value="Genomic_DNA"/>
</dbReference>
<dbReference type="EMBL" id="AJ251914">
    <property type="protein sequence ID" value="CAN59681.1"/>
    <property type="status" value="JOINED"/>
    <property type="molecule type" value="Genomic_DNA"/>
</dbReference>
<dbReference type="SMR" id="Q9TSV7"/>
<dbReference type="FunCoup" id="Q9TSV7">
    <property type="interactions" value="453"/>
</dbReference>
<dbReference type="PaxDb" id="9823-ENSSSCP00000001489"/>
<dbReference type="Ensembl" id="ENSSSCT00045065897.1">
    <property type="protein sequence ID" value="ENSSSCP00045046666.1"/>
    <property type="gene ID" value="ENSSSCG00045038092.1"/>
</dbReference>
<dbReference type="Ensembl" id="ENSSSCT00070048183.1">
    <property type="protein sequence ID" value="ENSSSCP00070040676.1"/>
    <property type="gene ID" value="ENSSSCG00070024131.1"/>
</dbReference>
<dbReference type="eggNOG" id="ENOG502QTMZ">
    <property type="taxonomic scope" value="Eukaryota"/>
</dbReference>
<dbReference type="InParanoid" id="Q9TSV7"/>
<dbReference type="Proteomes" id="UP000008227">
    <property type="component" value="Unplaced"/>
</dbReference>
<dbReference type="Proteomes" id="UP000314985">
    <property type="component" value="Chromosome 7"/>
</dbReference>
<dbReference type="Proteomes" id="UP000694570">
    <property type="component" value="Unplaced"/>
</dbReference>
<dbReference type="Proteomes" id="UP000694571">
    <property type="component" value="Unplaced"/>
</dbReference>
<dbReference type="Proteomes" id="UP000694720">
    <property type="component" value="Unplaced"/>
</dbReference>
<dbReference type="Proteomes" id="UP000694722">
    <property type="component" value="Unplaced"/>
</dbReference>
<dbReference type="Proteomes" id="UP000694723">
    <property type="component" value="Unplaced"/>
</dbReference>
<dbReference type="Proteomes" id="UP000694724">
    <property type="component" value="Unplaced"/>
</dbReference>
<dbReference type="Proteomes" id="UP000694725">
    <property type="component" value="Unplaced"/>
</dbReference>
<dbReference type="Proteomes" id="UP000694726">
    <property type="component" value="Unplaced"/>
</dbReference>
<dbReference type="Proteomes" id="UP000694727">
    <property type="component" value="Unplaced"/>
</dbReference>
<dbReference type="Proteomes" id="UP000694728">
    <property type="component" value="Unplaced"/>
</dbReference>
<dbReference type="GO" id="GO:0005634">
    <property type="term" value="C:nucleus"/>
    <property type="evidence" value="ECO:0000250"/>
    <property type="project" value="UniProtKB"/>
</dbReference>
<dbReference type="GO" id="GO:0071222">
    <property type="term" value="P:cellular response to lipopolysaccharide"/>
    <property type="evidence" value="ECO:0000250"/>
    <property type="project" value="UniProtKB"/>
</dbReference>
<dbReference type="GO" id="GO:0043124">
    <property type="term" value="P:negative regulation of canonical NF-kappaB signal transduction"/>
    <property type="evidence" value="ECO:0007669"/>
    <property type="project" value="InterPro"/>
</dbReference>
<dbReference type="GO" id="GO:0031665">
    <property type="term" value="P:negative regulation of lipopolysaccharide-mediated signaling pathway"/>
    <property type="evidence" value="ECO:0000250"/>
    <property type="project" value="UniProtKB"/>
</dbReference>
<dbReference type="GO" id="GO:0032088">
    <property type="term" value="P:negative regulation of NF-kappaB transcription factor activity"/>
    <property type="evidence" value="ECO:0000250"/>
    <property type="project" value="UniProtKB"/>
</dbReference>
<dbReference type="GO" id="GO:0034122">
    <property type="term" value="P:negative regulation of toll-like receptor signaling pathway"/>
    <property type="evidence" value="ECO:0000250"/>
    <property type="project" value="UniProtKB"/>
</dbReference>
<dbReference type="GO" id="GO:0032720">
    <property type="term" value="P:negative regulation of tumor necrosis factor production"/>
    <property type="evidence" value="ECO:0000250"/>
    <property type="project" value="UniProtKB"/>
</dbReference>
<dbReference type="FunFam" id="1.25.40.20:FF:000145">
    <property type="entry name" value="NF-kappa-B inhibitor-like protein 1 isoform X1"/>
    <property type="match status" value="1"/>
</dbReference>
<dbReference type="Gene3D" id="1.25.40.20">
    <property type="entry name" value="Ankyrin repeat-containing domain"/>
    <property type="match status" value="1"/>
</dbReference>
<dbReference type="InterPro" id="IPR036770">
    <property type="entry name" value="Ankyrin_rpt-contain_sf"/>
</dbReference>
<dbReference type="InterPro" id="IPR038753">
    <property type="entry name" value="NFKBIL1"/>
</dbReference>
<dbReference type="PANTHER" id="PTHR15263">
    <property type="entry name" value="I-KAPPA-B-LIKE PROTEIN IKBL"/>
    <property type="match status" value="1"/>
</dbReference>
<dbReference type="PANTHER" id="PTHR15263:SF1">
    <property type="entry name" value="NF-KAPPA-B INHIBITOR-LIKE PROTEIN 1"/>
    <property type="match status" value="1"/>
</dbReference>
<dbReference type="SUPFAM" id="SSF48403">
    <property type="entry name" value="Ankyrin repeat"/>
    <property type="match status" value="1"/>
</dbReference>
<dbReference type="PROSITE" id="PS50297">
    <property type="entry name" value="ANK_REP_REGION"/>
    <property type="match status" value="1"/>
</dbReference>
<evidence type="ECO:0000250" key="1"/>
<evidence type="ECO:0000250" key="2">
    <source>
        <dbReference type="UniProtKB" id="Q9UBC1"/>
    </source>
</evidence>
<evidence type="ECO:0000256" key="3">
    <source>
        <dbReference type="SAM" id="MobiDB-lite"/>
    </source>
</evidence>
<sequence>MSNPSPQVPEGEASTSVCRPKSSMASTSRRQRRERRFRRYLSAGRLVRAQALLQRHPGLDVDAGQPPPLHRACARHDAPALCLLLRLGADPAHQDRHGDTALHAAARQGPDAYTDFFLPLLSRCPSAMGIKNKDGETPGQILGWGPPWDSAEEEEEDEASKEREWRQKLQGELEDEWQEVIGRFEDDASHETQEPESFSAWSDRMAREHAQKRQQQRETEGACRPPRAEGSSHSWRQQEEEQRLFRERARAKEEELRESQARRAQEAPRDPVPEPARAGPRAEHPRGAGRGSLWRFGDVPWPCPGGGDPEAMAAALVARGPPLEEQGALRRYLRVQQVRWHPDRFLQRFRSQIETWELGRVMGAVTALSQALNRHAEALK</sequence>
<proteinExistence type="inferred from homology"/>
<organism>
    <name type="scientific">Sus scrofa</name>
    <name type="common">Pig</name>
    <dbReference type="NCBI Taxonomy" id="9823"/>
    <lineage>
        <taxon>Eukaryota</taxon>
        <taxon>Metazoa</taxon>
        <taxon>Chordata</taxon>
        <taxon>Craniata</taxon>
        <taxon>Vertebrata</taxon>
        <taxon>Euteleostomi</taxon>
        <taxon>Mammalia</taxon>
        <taxon>Eutheria</taxon>
        <taxon>Laurasiatheria</taxon>
        <taxon>Artiodactyla</taxon>
        <taxon>Suina</taxon>
        <taxon>Suidae</taxon>
        <taxon>Sus</taxon>
    </lineage>
</organism>
<protein>
    <recommendedName>
        <fullName>NF-kappa-B inhibitor-like protein 1</fullName>
    </recommendedName>
    <alternativeName>
        <fullName>Inhibitor of kappa B-like protein</fullName>
        <shortName>I-kappa-B-like protein</shortName>
        <shortName>IkappaBL</shortName>
    </alternativeName>
    <alternativeName>
        <fullName>Nuclear factor of kappa light polypeptide gene enhancer in B-cells inhibitor-like 1</fullName>
    </alternativeName>
</protein>
<name>IKBL1_PIG</name>
<feature type="chain" id="PRO_0000067013" description="NF-kappa-B inhibitor-like protein 1">
    <location>
        <begin position="1"/>
        <end position="380"/>
    </location>
</feature>
<feature type="repeat" description="ANK 1">
    <location>
        <begin position="64"/>
        <end position="93"/>
    </location>
</feature>
<feature type="repeat" description="ANK 2">
    <location>
        <begin position="97"/>
        <end position="133"/>
    </location>
</feature>
<feature type="region of interest" description="Disordered" evidence="3">
    <location>
        <begin position="1"/>
        <end position="34"/>
    </location>
</feature>
<feature type="region of interest" description="Disordered" evidence="3">
    <location>
        <begin position="131"/>
        <end position="167"/>
    </location>
</feature>
<feature type="region of interest" description="Disordered" evidence="3">
    <location>
        <begin position="185"/>
        <end position="293"/>
    </location>
</feature>
<feature type="compositionally biased region" description="Polar residues" evidence="3">
    <location>
        <begin position="13"/>
        <end position="28"/>
    </location>
</feature>
<feature type="compositionally biased region" description="Acidic residues" evidence="3">
    <location>
        <begin position="150"/>
        <end position="159"/>
    </location>
</feature>
<feature type="compositionally biased region" description="Basic and acidic residues" evidence="3">
    <location>
        <begin position="204"/>
        <end position="221"/>
    </location>
</feature>
<feature type="compositionally biased region" description="Basic and acidic residues" evidence="3">
    <location>
        <begin position="236"/>
        <end position="272"/>
    </location>
</feature>
<feature type="modified residue" description="Phosphoserine" evidence="2">
    <location>
        <position position="150"/>
    </location>
</feature>
<reference key="1">
    <citation type="journal article" date="2001" name="Tissue Antigens">
        <title>Sequence of the swine major histocompatibility complex region containing all non-classical class I genes.</title>
        <authorList>
            <person name="Chardon P."/>
            <person name="Rogel-Gaillard C."/>
            <person name="Cattolico L."/>
            <person name="Duprat S."/>
            <person name="Vaiman M."/>
            <person name="Renard C."/>
        </authorList>
    </citation>
    <scope>NUCLEOTIDE SEQUENCE [LARGE SCALE GENOMIC DNA]</scope>
    <source>
        <strain>Large white</strain>
        <tissue>Fibroblast</tissue>
    </source>
</reference>
<reference key="2">
    <citation type="submission" date="2007-05" db="EMBL/GenBank/DDBJ databases">
        <authorList>
            <consortium name="Porcine genome sequencing project"/>
        </authorList>
    </citation>
    <scope>NUCLEOTIDE SEQUENCE [LARGE SCALE GENOMIC DNA]</scope>
</reference>
<comment type="function">
    <text evidence="1">Involved in the regulation of innate immune response. Acts as negative regulator of Toll-like receptor and interferon-regulatory factor (IRF) signaling pathways. Contributes to the negative regulation of transcriptional activation of NF-kappa-B target genes in response to endogenous pro-inflammatory stimuli (By similarity).</text>
</comment>
<comment type="subunit">
    <text evidence="1">Interacts with CACTIN (via N-terminal domain); the interaction occurs in a pro-inflammatory-independent manner.</text>
</comment>
<comment type="subcellular location">
    <subcellularLocation>
        <location evidence="1">Nucleus</location>
    </subcellularLocation>
    <text evidence="1">Nuclear localization with a speckled expression pattern in some cells. Colocalizes with CACTIN in the nucleus (By similarity).</text>
</comment>
<keyword id="KW-0040">ANK repeat</keyword>
<keyword id="KW-0539">Nucleus</keyword>
<keyword id="KW-0597">Phosphoprotein</keyword>
<keyword id="KW-1185">Reference proteome</keyword>
<keyword id="KW-0677">Repeat</keyword>
<accession>Q9TSV7</accession>
<accession>A5D9N1</accession>
<gene>
    <name type="primary">NFKBIL1</name>
    <name type="synonym">IKBL</name>
</gene>